<comment type="function">
    <text>SHV enzymes hydrolyze broad spectrum cephalosporins notably cefotaxime and ceftazidime. SHV-4 causes particularly high levels of resistance to aztreonam and ceftazidime.</text>
</comment>
<comment type="catalytic activity">
    <reaction evidence="2">
        <text>a beta-lactam + H2O = a substituted beta-amino acid</text>
        <dbReference type="Rhea" id="RHEA:20401"/>
        <dbReference type="ChEBI" id="CHEBI:15377"/>
        <dbReference type="ChEBI" id="CHEBI:35627"/>
        <dbReference type="ChEBI" id="CHEBI:140347"/>
        <dbReference type="EC" id="3.5.2.6"/>
    </reaction>
</comment>
<comment type="miscellaneous">
    <text evidence="4">The class A beta-lactamase family has a specific amino-acid numbering system, sometimes called Ambler or ABL numbering and often misspelt as Amber. A multiple sequence alignment was used to derive a consensus sequence and then the consensus was numbered taking into account insertions and deletions. This allows use of identical numbers, e.g. for active site residues, despite differences in protein length. UniProt always uses natural numbering of residues, hence there appear to be differences in numbering between this entry and some papers.</text>
</comment>
<comment type="similarity">
    <text evidence="3">Belongs to the class-A beta-lactamase family.</text>
</comment>
<keyword id="KW-0046">Antibiotic resistance</keyword>
<keyword id="KW-0903">Direct protein sequencing</keyword>
<keyword id="KW-1015">Disulfide bond</keyword>
<keyword id="KW-0378">Hydrolase</keyword>
<keyword id="KW-0614">Plasmid</keyword>
<name>BLA4_KLEPN</name>
<dbReference type="EC" id="3.5.2.6"/>
<dbReference type="PIR" id="A60448">
    <property type="entry name" value="A60448"/>
</dbReference>
<dbReference type="SMR" id="P37323"/>
<dbReference type="GO" id="GO:0008800">
    <property type="term" value="F:beta-lactamase activity"/>
    <property type="evidence" value="ECO:0007669"/>
    <property type="project" value="UniProtKB-EC"/>
</dbReference>
<dbReference type="GO" id="GO:0030655">
    <property type="term" value="P:beta-lactam antibiotic catabolic process"/>
    <property type="evidence" value="ECO:0007669"/>
    <property type="project" value="InterPro"/>
</dbReference>
<dbReference type="GO" id="GO:0046677">
    <property type="term" value="P:response to antibiotic"/>
    <property type="evidence" value="ECO:0007669"/>
    <property type="project" value="UniProtKB-KW"/>
</dbReference>
<dbReference type="Gene3D" id="3.40.710.10">
    <property type="entry name" value="DD-peptidase/beta-lactamase superfamily"/>
    <property type="match status" value="1"/>
</dbReference>
<dbReference type="InterPro" id="IPR012338">
    <property type="entry name" value="Beta-lactam/transpept-like"/>
</dbReference>
<dbReference type="InterPro" id="IPR045155">
    <property type="entry name" value="Beta-lactam_cat"/>
</dbReference>
<dbReference type="InterPro" id="IPR000871">
    <property type="entry name" value="Beta-lactam_class-A"/>
</dbReference>
<dbReference type="InterPro" id="IPR023650">
    <property type="entry name" value="Beta-lactam_class-A_AS"/>
</dbReference>
<dbReference type="NCBIfam" id="NF033103">
    <property type="entry name" value="bla_class_A"/>
    <property type="match status" value="1"/>
</dbReference>
<dbReference type="NCBIfam" id="NF012143">
    <property type="entry name" value="SHV_LEN_OKP"/>
    <property type="match status" value="1"/>
</dbReference>
<dbReference type="PANTHER" id="PTHR35333">
    <property type="entry name" value="BETA-LACTAMASE"/>
    <property type="match status" value="1"/>
</dbReference>
<dbReference type="PANTHER" id="PTHR35333:SF3">
    <property type="entry name" value="BETA-LACTAMASE-TYPE TRANSPEPTIDASE FOLD CONTAINING PROTEIN"/>
    <property type="match status" value="1"/>
</dbReference>
<dbReference type="Pfam" id="PF13354">
    <property type="entry name" value="Beta-lactamase2"/>
    <property type="match status" value="1"/>
</dbReference>
<dbReference type="PRINTS" id="PR00118">
    <property type="entry name" value="BLACTAMASEA"/>
</dbReference>
<dbReference type="SUPFAM" id="SSF56601">
    <property type="entry name" value="beta-lactamase/transpeptidase-like"/>
    <property type="match status" value="1"/>
</dbReference>
<dbReference type="PROSITE" id="PS00146">
    <property type="entry name" value="BETA_LACTAMASE_A"/>
    <property type="match status" value="1"/>
</dbReference>
<reference key="1">
    <citation type="journal article" date="1989" name="Antimicrob. Agents Chemother.">
        <title>Structural features related to hydrolytic activity against ceftazidime of plasmid-mediated SHV-type CAZ-5 beta-lactamase.</title>
        <authorList>
            <person name="Peduzzi J."/>
            <person name="Barthelemy M."/>
            <person name="Tiwari K."/>
            <person name="Mattioni D."/>
            <person name="Labia R."/>
        </authorList>
    </citation>
    <scope>PROTEIN SEQUENCE</scope>
    <source>
        <strain>210-2</strain>
    </source>
</reference>
<reference key="2">
    <citation type="journal article" date="1991" name="Biochem. J.">
        <title>A standard numbering scheme for the class A beta-lactamases.</title>
        <authorList>
            <person name="Ambler R.P."/>
            <person name="Coulson A.F."/>
            <person name="Frere J.M."/>
            <person name="Ghuysen J.M."/>
            <person name="Joris B."/>
            <person name="Forsman M."/>
            <person name="Levesque R.C."/>
            <person name="Tiraby G."/>
            <person name="Waley S.G."/>
        </authorList>
    </citation>
    <scope>AMINO ACID NUMBERING SCHEME</scope>
</reference>
<geneLocation type="plasmid">
    <name>pUD21</name>
</geneLocation>
<gene>
    <name type="primary">bla</name>
    <name type="synonym">shv4</name>
</gene>
<protein>
    <recommendedName>
        <fullName>Beta-lactamase SHV-4</fullName>
        <ecNumber>3.5.2.6</ecNumber>
    </recommendedName>
    <alternativeName>
        <fullName>Ceftazidimase 5</fullName>
        <shortName>CAZ-5</shortName>
    </alternativeName>
</protein>
<evidence type="ECO:0000250" key="1"/>
<evidence type="ECO:0000255" key="2">
    <source>
        <dbReference type="PROSITE-ProRule" id="PRU10101"/>
    </source>
</evidence>
<evidence type="ECO:0000305" key="3"/>
<evidence type="ECO:0000305" key="4">
    <source>
    </source>
</evidence>
<accession>P37323</accession>
<proteinExistence type="evidence at protein level"/>
<sequence>SPQPLEQIKLSESQLSGRVGMIEMDLASGRTLTAWRADERFPMMSTFKVVLCGAVLARVDAGDEQLERKIHYRQQDLVDYSPVSEKHLADGMTVGELCAAAITMSDNSAANLLLATVGGPAGLTAFLRQIGDNVTRLDRWETELNEALPGDARDTTTPASMAATLRKLLTSQRLSARSQLQLLQWMVDDRVAGPLIRSVLPAGWFIADKTGASKRGARGIVALLGPNNKAERIVVIYLRDTPASMAERNQQIAGIGAALIEHWQR</sequence>
<organism>
    <name type="scientific">Klebsiella pneumoniae</name>
    <dbReference type="NCBI Taxonomy" id="573"/>
    <lineage>
        <taxon>Bacteria</taxon>
        <taxon>Pseudomonadati</taxon>
        <taxon>Pseudomonadota</taxon>
        <taxon>Gammaproteobacteria</taxon>
        <taxon>Enterobacterales</taxon>
        <taxon>Enterobacteriaceae</taxon>
        <taxon>Klebsiella/Raoultella group</taxon>
        <taxon>Klebsiella</taxon>
        <taxon>Klebsiella pneumoniae complex</taxon>
    </lineage>
</organism>
<feature type="chain" id="PRO_0000195440" description="Beta-lactamase SHV-4">
    <location>
        <begin position="1"/>
        <end position="265"/>
    </location>
</feature>
<feature type="active site" description="Acyl-ester intermediate" evidence="2">
    <location>
        <position position="45"/>
    </location>
</feature>
<feature type="active site" description="Proton acceptor" evidence="1">
    <location>
        <position position="143"/>
    </location>
</feature>
<feature type="binding site" evidence="1">
    <location>
        <begin position="209"/>
        <end position="211"/>
    </location>
    <ligand>
        <name>substrate</name>
    </ligand>
</feature>
<feature type="disulfide bond" evidence="1">
    <location>
        <begin position="52"/>
        <end position="98"/>
    </location>
</feature>